<organism>
    <name type="scientific">Ovis aries</name>
    <name type="common">Sheep</name>
    <dbReference type="NCBI Taxonomy" id="9940"/>
    <lineage>
        <taxon>Eukaryota</taxon>
        <taxon>Metazoa</taxon>
        <taxon>Chordata</taxon>
        <taxon>Craniata</taxon>
        <taxon>Vertebrata</taxon>
        <taxon>Euteleostomi</taxon>
        <taxon>Mammalia</taxon>
        <taxon>Eutheria</taxon>
        <taxon>Laurasiatheria</taxon>
        <taxon>Artiodactyla</taxon>
        <taxon>Ruminantia</taxon>
        <taxon>Pecora</taxon>
        <taxon>Bovidae</taxon>
        <taxon>Caprinae</taxon>
        <taxon>Ovis</taxon>
    </lineage>
</organism>
<keyword id="KW-0903">Direct protein sequencing</keyword>
<keyword id="KW-1015">Disulfide bond</keyword>
<keyword id="KW-0325">Glycoprotein</keyword>
<keyword id="KW-0372">Hormone</keyword>
<keyword id="KW-0421">Lactation</keyword>
<keyword id="KW-0597">Phosphoprotein</keyword>
<keyword id="KW-1185">Reference proteome</keyword>
<keyword id="KW-0964">Secreted</keyword>
<keyword id="KW-0732">Signal</keyword>
<gene>
    <name type="primary">PRL</name>
</gene>
<sequence>MDSKGSAQKGSRLLLLLVVSNLLLCQGVVSTPVCPNGPGNCQVSLRDLFDRAVMVSHYIHNLSSEMFNEFDKRYAQGKGFITMALNSCHTSSLPTPEDKEQAQQTHHEVLMSLILGLLRSWNDPLYHLVTEVRGMKGVPDAILSRAIEIEEENKRLLEGMEMIFGQVIPGAKETEPYPVWSGLPSLQTKDEDARHSAFYNLLHCLRRDSSKIDTYLKLLNCRIIYNNNC</sequence>
<protein>
    <recommendedName>
        <fullName>Prolactin</fullName>
        <shortName>PRL</shortName>
    </recommendedName>
</protein>
<reference key="1">
    <citation type="journal article" date="1989" name="Nucleic Acids Res.">
        <title>Cloning and nucleotide sequence of an ovine prolactin cDNA.</title>
        <authorList>
            <person name="Adams T.E."/>
            <person name="Baker L."/>
            <person name="Brandon M.R."/>
        </authorList>
    </citation>
    <scope>NUCLEOTIDE SEQUENCE [MRNA]</scope>
    <source>
        <tissue>Pituitary</tissue>
    </source>
</reference>
<reference key="2">
    <citation type="journal article" date="1989" name="Gene">
        <title>Cloning and nucleotide sequence of ovine prolactin cDNA.</title>
        <authorList>
            <person name="Varma S."/>
            <person name="Kwok S."/>
            <person name="Ebner K.E."/>
        </authorList>
    </citation>
    <scope>NUCLEOTIDE SEQUENCE [MRNA]</scope>
    <source>
        <tissue>Pituitary</tissue>
    </source>
</reference>
<reference key="3">
    <citation type="journal article" date="1994" name="Neuroendocrinology">
        <title>Prolactin gene expression in ovine and caprine mammary gland.</title>
        <authorList>
            <person name="le Provost F."/>
            <person name="Leroux C."/>
            <person name="Martin P."/>
            <person name="Gaye P."/>
            <person name="Djiane J."/>
        </authorList>
    </citation>
    <scope>NUCLEOTIDE SEQUENCE [MRNA]</scope>
</reference>
<reference key="4">
    <citation type="journal article" date="1970" name="Arch. Biochem. Biophys.">
        <title>Studies on pituitary lactogenic hormone. XXX. The primary structure of the sheep hormone.</title>
        <authorList>
            <person name="Li C.H."/>
            <person name="Dixon J.S."/>
            <person name="Lo T.-B."/>
            <person name="Schmidt K.D."/>
            <person name="Pankov Y.A."/>
        </authorList>
    </citation>
    <scope>PROTEIN SEQUENCE OF 31-229</scope>
</reference>
<reference key="5">
    <citation type="journal article" date="1976" name="Int. J. Pept. Protein Res.">
        <title>Studies on pituitary lactogenic hormone. The primary structure of the porcine hormone.</title>
        <authorList>
            <person name="Li C.H."/>
        </authorList>
    </citation>
    <scope>SEQUENCE REVISION</scope>
</reference>
<comment type="function">
    <text>Prolactin acts primarily on the mammary gland by promoting lactation, mammogenesis, mitogenesis and osmoregulation.</text>
</comment>
<comment type="subunit">
    <text evidence="1">Interacts with PRLR.</text>
</comment>
<comment type="subcellular location">
    <subcellularLocation>
        <location>Secreted</location>
    </subcellularLocation>
</comment>
<comment type="similarity">
    <text evidence="5">Belongs to the somatotropin/prolactin family.</text>
</comment>
<comment type="sequence caution" evidence="5">
    <conflict type="erroneous initiation">
        <sequence resource="EMBL-CDS" id="AAA31578"/>
    </conflict>
</comment>
<proteinExistence type="evidence at protein level"/>
<dbReference type="EMBL" id="X13483">
    <property type="protein sequence ID" value="CAA31839.1"/>
    <property type="molecule type" value="mRNA"/>
</dbReference>
<dbReference type="EMBL" id="M27057">
    <property type="protein sequence ID" value="AAA31578.1"/>
    <property type="status" value="ALT_INIT"/>
    <property type="molecule type" value="mRNA"/>
</dbReference>
<dbReference type="EMBL" id="X76050">
    <property type="protein sequence ID" value="CAA53635.1"/>
    <property type="molecule type" value="mRNA"/>
</dbReference>
<dbReference type="PIR" id="I83983">
    <property type="entry name" value="LCSH"/>
</dbReference>
<dbReference type="RefSeq" id="NP_001009306.1">
    <property type="nucleotide sequence ID" value="NM_001009306.1"/>
</dbReference>
<dbReference type="SMR" id="P01240"/>
<dbReference type="STRING" id="9940.ENSOARP00000009811"/>
<dbReference type="GlyCosmos" id="P01240">
    <property type="glycosylation" value="1 site, No reported glycans"/>
</dbReference>
<dbReference type="iPTMnet" id="P01240"/>
<dbReference type="PaxDb" id="9940-ENSOARP00000009811"/>
<dbReference type="Ensembl" id="ENSOART00025026211">
    <property type="protein sequence ID" value="ENSOARP00025012550"/>
    <property type="gene ID" value="ENSOARG00025016036"/>
</dbReference>
<dbReference type="Ensembl" id="ENSOART00180031958">
    <property type="protein sequence ID" value="ENSOARP00180016413"/>
    <property type="gene ID" value="ENSOARG00180019395"/>
</dbReference>
<dbReference type="Ensembl" id="ENSOART00185038852">
    <property type="protein sequence ID" value="ENSOARP00185019124"/>
    <property type="gene ID" value="ENSOARG00185023628"/>
</dbReference>
<dbReference type="Ensembl" id="ENSOART00215033503">
    <property type="protein sequence ID" value="ENSOARP00215017592"/>
    <property type="gene ID" value="ENSOARG00215019986"/>
</dbReference>
<dbReference type="Ensembl" id="ENSOART00220077984">
    <property type="protein sequence ID" value="ENSOARP00220041868"/>
    <property type="gene ID" value="ENSOARG00220046911"/>
</dbReference>
<dbReference type="GeneID" id="443317"/>
<dbReference type="KEGG" id="oas:443317"/>
<dbReference type="CTD" id="5617"/>
<dbReference type="eggNOG" id="ENOG502QYU3">
    <property type="taxonomic scope" value="Eukaryota"/>
</dbReference>
<dbReference type="OrthoDB" id="9946219at2759"/>
<dbReference type="Proteomes" id="UP000002356">
    <property type="component" value="Unplaced"/>
</dbReference>
<dbReference type="GO" id="GO:0005615">
    <property type="term" value="C:extracellular space"/>
    <property type="evidence" value="ECO:0000250"/>
    <property type="project" value="AgBase"/>
</dbReference>
<dbReference type="GO" id="GO:0005179">
    <property type="term" value="F:hormone activity"/>
    <property type="evidence" value="ECO:0007669"/>
    <property type="project" value="UniProtKB-KW"/>
</dbReference>
<dbReference type="GO" id="GO:0005148">
    <property type="term" value="F:prolactin receptor binding"/>
    <property type="evidence" value="ECO:0000314"/>
    <property type="project" value="AgBase"/>
</dbReference>
<dbReference type="GO" id="GO:0009058">
    <property type="term" value="P:biosynthetic process"/>
    <property type="evidence" value="ECO:0000250"/>
    <property type="project" value="AgBase"/>
</dbReference>
<dbReference type="GO" id="GO:0001825">
    <property type="term" value="P:blastocyst formation"/>
    <property type="evidence" value="ECO:0000250"/>
    <property type="project" value="AgBase"/>
</dbReference>
<dbReference type="GO" id="GO:0007166">
    <property type="term" value="P:cell surface receptor signaling pathway"/>
    <property type="evidence" value="ECO:0000250"/>
    <property type="project" value="AgBase"/>
</dbReference>
<dbReference type="GO" id="GO:0007565">
    <property type="term" value="P:female pregnancy"/>
    <property type="evidence" value="ECO:0007669"/>
    <property type="project" value="TreeGrafter"/>
</dbReference>
<dbReference type="GO" id="GO:0007595">
    <property type="term" value="P:lactation"/>
    <property type="evidence" value="ECO:0007669"/>
    <property type="project" value="UniProtKB-KW"/>
</dbReference>
<dbReference type="GO" id="GO:0043066">
    <property type="term" value="P:negative regulation of apoptotic process"/>
    <property type="evidence" value="ECO:0000315"/>
    <property type="project" value="AgBase"/>
</dbReference>
<dbReference type="GO" id="GO:0033685">
    <property type="term" value="P:negative regulation of luteinizing hormone secretion"/>
    <property type="evidence" value="ECO:0000315"/>
    <property type="project" value="AgBase"/>
</dbReference>
<dbReference type="GO" id="GO:0090278">
    <property type="term" value="P:negative regulation of peptide hormone secretion"/>
    <property type="evidence" value="ECO:0000314"/>
    <property type="project" value="AgBase"/>
</dbReference>
<dbReference type="GO" id="GO:0030072">
    <property type="term" value="P:peptide hormone secretion"/>
    <property type="evidence" value="ECO:0000314"/>
    <property type="project" value="AgBase"/>
</dbReference>
<dbReference type="GO" id="GO:0008284">
    <property type="term" value="P:positive regulation of cell population proliferation"/>
    <property type="evidence" value="ECO:0007669"/>
    <property type="project" value="TreeGrafter"/>
</dbReference>
<dbReference type="GO" id="GO:0045723">
    <property type="term" value="P:positive regulation of fatty acid biosynthetic process"/>
    <property type="evidence" value="ECO:0000314"/>
    <property type="project" value="AgBase"/>
</dbReference>
<dbReference type="GO" id="GO:0010628">
    <property type="term" value="P:positive regulation of gene expression"/>
    <property type="evidence" value="ECO:0000314"/>
    <property type="project" value="AgBase"/>
</dbReference>
<dbReference type="GO" id="GO:1903489">
    <property type="term" value="P:positive regulation of lactation"/>
    <property type="evidence" value="ECO:0000250"/>
    <property type="project" value="AgBase"/>
</dbReference>
<dbReference type="GO" id="GO:0046427">
    <property type="term" value="P:positive regulation of receptor signaling pathway via JAK-STAT"/>
    <property type="evidence" value="ECO:0007669"/>
    <property type="project" value="TreeGrafter"/>
</dbReference>
<dbReference type="GO" id="GO:0031667">
    <property type="term" value="P:response to nutrient levels"/>
    <property type="evidence" value="ECO:0007669"/>
    <property type="project" value="TreeGrafter"/>
</dbReference>
<dbReference type="CDD" id="cd10288">
    <property type="entry name" value="prolactin_like"/>
    <property type="match status" value="1"/>
</dbReference>
<dbReference type="FunFam" id="1.20.1250.10:FF:000003">
    <property type="entry name" value="Prolactin"/>
    <property type="match status" value="1"/>
</dbReference>
<dbReference type="Gene3D" id="1.20.1250.10">
    <property type="match status" value="1"/>
</dbReference>
<dbReference type="InterPro" id="IPR009079">
    <property type="entry name" value="4_helix_cytokine-like_core"/>
</dbReference>
<dbReference type="InterPro" id="IPR001400">
    <property type="entry name" value="Somatotropin/Prolactin"/>
</dbReference>
<dbReference type="InterPro" id="IPR018116">
    <property type="entry name" value="Somatotropin_CS"/>
</dbReference>
<dbReference type="PANTHER" id="PTHR11417:SF5">
    <property type="entry name" value="PROLACTIN"/>
    <property type="match status" value="1"/>
</dbReference>
<dbReference type="PANTHER" id="PTHR11417">
    <property type="entry name" value="SOMATOTROPIN,PROLACTIN"/>
    <property type="match status" value="1"/>
</dbReference>
<dbReference type="Pfam" id="PF00103">
    <property type="entry name" value="Hormone_1"/>
    <property type="match status" value="1"/>
</dbReference>
<dbReference type="PRINTS" id="PR00836">
    <property type="entry name" value="SOMATOTROPIN"/>
</dbReference>
<dbReference type="SUPFAM" id="SSF47266">
    <property type="entry name" value="4-helical cytokines"/>
    <property type="match status" value="1"/>
</dbReference>
<dbReference type="PROSITE" id="PS00266">
    <property type="entry name" value="SOMATOTROPIN_1"/>
    <property type="match status" value="1"/>
</dbReference>
<dbReference type="PROSITE" id="PS00338">
    <property type="entry name" value="SOMATOTROPIN_2"/>
    <property type="match status" value="1"/>
</dbReference>
<feature type="signal peptide" evidence="4">
    <location>
        <begin position="1"/>
        <end position="30"/>
    </location>
</feature>
<feature type="chain" id="PRO_0000032926" description="Prolactin">
    <location>
        <begin position="31"/>
        <end position="229"/>
    </location>
</feature>
<feature type="modified residue" description="Phosphoserine" evidence="2">
    <location>
        <position position="56"/>
    </location>
</feature>
<feature type="modified residue" description="Phosphoserine" evidence="2">
    <location>
        <position position="64"/>
    </location>
</feature>
<feature type="modified residue" description="Phosphoserine" evidence="2">
    <location>
        <position position="120"/>
    </location>
</feature>
<feature type="glycosylation site" description="N-linked (GlcNAc...) asparagine; partial">
    <location>
        <position position="61"/>
    </location>
</feature>
<feature type="disulfide bond" evidence="3">
    <location>
        <begin position="34"/>
        <end position="41"/>
    </location>
</feature>
<feature type="disulfide bond" evidence="3">
    <location>
        <begin position="88"/>
        <end position="204"/>
    </location>
</feature>
<feature type="disulfide bond" evidence="3">
    <location>
        <begin position="221"/>
        <end position="229"/>
    </location>
</feature>
<feature type="sequence conflict" description="In Ref. 2; AAA31578." evidence="5" ref="2">
    <original>N</original>
    <variation>D</variation>
    <location>
        <position position="40"/>
    </location>
</feature>
<evidence type="ECO:0000250" key="1">
    <source>
        <dbReference type="UniProtKB" id="P01236"/>
    </source>
</evidence>
<evidence type="ECO:0000250" key="2">
    <source>
        <dbReference type="UniProtKB" id="P01239"/>
    </source>
</evidence>
<evidence type="ECO:0000269" key="3">
    <source>
    </source>
</evidence>
<evidence type="ECO:0000269" key="4">
    <source>
    </source>
</evidence>
<evidence type="ECO:0000305" key="5"/>
<name>PRL_SHEEP</name>
<accession>P01240</accession>
<accession>Q28587</accession>